<protein>
    <recommendedName>
        <fullName evidence="1">Deoxyribose-phosphate aldolase 2</fullName>
        <shortName evidence="1">DERA 2</shortName>
        <ecNumber evidence="1">4.1.2.4</ecNumber>
    </recommendedName>
    <alternativeName>
        <fullName evidence="1">2-deoxy-D-ribose 5-phosphate aldolase 2</fullName>
    </alternativeName>
    <alternativeName>
        <fullName evidence="1">Phosphodeoxyriboaldolase 2</fullName>
        <shortName evidence="1">Deoxyriboaldolase 2</shortName>
    </alternativeName>
</protein>
<accession>P99174</accession>
<accession>Q99SC2</accession>
<sequence length="220" mass="23341">MNSAKLIDHTLLKPESTRTQIDQIIDEAKAYHFKSVCVNPTHVKYAAERLADSEVLVCTVIGFPLGASTTATKAFETEDAIQNGADEIDMVINIGALKDGRFDDVQQDIEAVVKAAKGHTVKVIIETVLLDHDEIVKASELTKVAGADFVKTSTGFAGGGATAEDVKLMKDTVGADVEVKASGGVRNLEDFNKMVEAGATRIGASAGVQIMQGLEADSDY</sequence>
<feature type="chain" id="PRO_0000057260" description="Deoxyribose-phosphate aldolase 2">
    <location>
        <begin position="1"/>
        <end position="220"/>
    </location>
</feature>
<feature type="active site" description="Proton donor/acceptor" evidence="1">
    <location>
        <position position="89"/>
    </location>
</feature>
<feature type="active site" description="Schiff-base intermediate with acetaldehyde" evidence="1">
    <location>
        <position position="151"/>
    </location>
</feature>
<feature type="active site" description="Proton donor/acceptor" evidence="1">
    <location>
        <position position="180"/>
    </location>
</feature>
<proteinExistence type="evidence at protein level"/>
<gene>
    <name evidence="1" type="primary">deoC2</name>
    <name type="ordered locus">SA1939</name>
</gene>
<keyword id="KW-0963">Cytoplasm</keyword>
<keyword id="KW-0456">Lyase</keyword>
<keyword id="KW-0704">Schiff base</keyword>
<name>DEOC2_STAAN</name>
<organism>
    <name type="scientific">Staphylococcus aureus (strain N315)</name>
    <dbReference type="NCBI Taxonomy" id="158879"/>
    <lineage>
        <taxon>Bacteria</taxon>
        <taxon>Bacillati</taxon>
        <taxon>Bacillota</taxon>
        <taxon>Bacilli</taxon>
        <taxon>Bacillales</taxon>
        <taxon>Staphylococcaceae</taxon>
        <taxon>Staphylococcus</taxon>
    </lineage>
</organism>
<comment type="function">
    <text evidence="1">Catalyzes a reversible aldol reaction between acetaldehyde and D-glyceraldehyde 3-phosphate to generate 2-deoxy-D-ribose 5-phosphate.</text>
</comment>
<comment type="catalytic activity">
    <reaction evidence="1">
        <text>2-deoxy-D-ribose 5-phosphate = D-glyceraldehyde 3-phosphate + acetaldehyde</text>
        <dbReference type="Rhea" id="RHEA:12821"/>
        <dbReference type="ChEBI" id="CHEBI:15343"/>
        <dbReference type="ChEBI" id="CHEBI:59776"/>
        <dbReference type="ChEBI" id="CHEBI:62877"/>
        <dbReference type="EC" id="4.1.2.4"/>
    </reaction>
</comment>
<comment type="pathway">
    <text evidence="1">Carbohydrate degradation; 2-deoxy-D-ribose 1-phosphate degradation; D-glyceraldehyde 3-phosphate and acetaldehyde from 2-deoxy-alpha-D-ribose 1-phosphate: step 2/2.</text>
</comment>
<comment type="subcellular location">
    <subcellularLocation>
        <location evidence="1">Cytoplasm</location>
    </subcellularLocation>
</comment>
<comment type="similarity">
    <text evidence="1 2">Belongs to the DeoC/FbaB aldolase family. DeoC type 1 subfamily.</text>
</comment>
<evidence type="ECO:0000255" key="1">
    <source>
        <dbReference type="HAMAP-Rule" id="MF_00114"/>
    </source>
</evidence>
<evidence type="ECO:0000305" key="2"/>
<reference key="1">
    <citation type="journal article" date="2001" name="Lancet">
        <title>Whole genome sequencing of meticillin-resistant Staphylococcus aureus.</title>
        <authorList>
            <person name="Kuroda M."/>
            <person name="Ohta T."/>
            <person name="Uchiyama I."/>
            <person name="Baba T."/>
            <person name="Yuzawa H."/>
            <person name="Kobayashi I."/>
            <person name="Cui L."/>
            <person name="Oguchi A."/>
            <person name="Aoki K."/>
            <person name="Nagai Y."/>
            <person name="Lian J.-Q."/>
            <person name="Ito T."/>
            <person name="Kanamori M."/>
            <person name="Matsumaru H."/>
            <person name="Maruyama A."/>
            <person name="Murakami H."/>
            <person name="Hosoyama A."/>
            <person name="Mizutani-Ui Y."/>
            <person name="Takahashi N.K."/>
            <person name="Sawano T."/>
            <person name="Inoue R."/>
            <person name="Kaito C."/>
            <person name="Sekimizu K."/>
            <person name="Hirakawa H."/>
            <person name="Kuhara S."/>
            <person name="Goto S."/>
            <person name="Yabuzaki J."/>
            <person name="Kanehisa M."/>
            <person name="Yamashita A."/>
            <person name="Oshima K."/>
            <person name="Furuya K."/>
            <person name="Yoshino C."/>
            <person name="Shiba T."/>
            <person name="Hattori M."/>
            <person name="Ogasawara N."/>
            <person name="Hayashi H."/>
            <person name="Hiramatsu K."/>
        </authorList>
    </citation>
    <scope>NUCLEOTIDE SEQUENCE [LARGE SCALE GENOMIC DNA]</scope>
    <source>
        <strain>N315</strain>
    </source>
</reference>
<reference key="2">
    <citation type="journal article" date="2005" name="J. Microbiol. Methods">
        <title>Correlation of proteomic and transcriptomic profiles of Staphylococcus aureus during the post-exponential phase of growth.</title>
        <authorList>
            <person name="Scherl A."/>
            <person name="Francois P."/>
            <person name="Bento M."/>
            <person name="Deshusses J.M."/>
            <person name="Charbonnier Y."/>
            <person name="Converset V."/>
            <person name="Huyghe A."/>
            <person name="Walter N."/>
            <person name="Hoogland C."/>
            <person name="Appel R.D."/>
            <person name="Sanchez J.-C."/>
            <person name="Zimmermann-Ivol C.G."/>
            <person name="Corthals G.L."/>
            <person name="Hochstrasser D.F."/>
            <person name="Schrenzel J."/>
        </authorList>
    </citation>
    <scope>IDENTIFICATION BY MASS SPECTROMETRY</scope>
    <source>
        <strain>N315</strain>
    </source>
</reference>
<reference key="3">
    <citation type="submission" date="2007-10" db="UniProtKB">
        <title>Shotgun proteomic analysis of total and membrane protein extracts of S. aureus strain N315.</title>
        <authorList>
            <person name="Vaezzadeh A.R."/>
            <person name="Deshusses J."/>
            <person name="Lescuyer P."/>
            <person name="Hochstrasser D.F."/>
        </authorList>
    </citation>
    <scope>IDENTIFICATION BY MASS SPECTROMETRY [LARGE SCALE ANALYSIS]</scope>
    <source>
        <strain>N315</strain>
    </source>
</reference>
<dbReference type="EC" id="4.1.2.4" evidence="1"/>
<dbReference type="EMBL" id="BA000018">
    <property type="protein sequence ID" value="BAB43223.1"/>
    <property type="molecule type" value="Genomic_DNA"/>
</dbReference>
<dbReference type="PIR" id="F90007">
    <property type="entry name" value="F90007"/>
</dbReference>
<dbReference type="SMR" id="P99174"/>
<dbReference type="EnsemblBacteria" id="BAB43223">
    <property type="protein sequence ID" value="BAB43223"/>
    <property type="gene ID" value="BAB43223"/>
</dbReference>
<dbReference type="KEGG" id="sau:SA1939"/>
<dbReference type="HOGENOM" id="CLU_053595_0_0_9"/>
<dbReference type="UniPathway" id="UPA00002">
    <property type="reaction ID" value="UER00468"/>
</dbReference>
<dbReference type="GO" id="GO:0005737">
    <property type="term" value="C:cytoplasm"/>
    <property type="evidence" value="ECO:0007669"/>
    <property type="project" value="UniProtKB-SubCell"/>
</dbReference>
<dbReference type="GO" id="GO:0004139">
    <property type="term" value="F:deoxyribose-phosphate aldolase activity"/>
    <property type="evidence" value="ECO:0007669"/>
    <property type="project" value="UniProtKB-UniRule"/>
</dbReference>
<dbReference type="GO" id="GO:0006018">
    <property type="term" value="P:2-deoxyribose 1-phosphate catabolic process"/>
    <property type="evidence" value="ECO:0007669"/>
    <property type="project" value="UniProtKB-UniRule"/>
</dbReference>
<dbReference type="GO" id="GO:0016052">
    <property type="term" value="P:carbohydrate catabolic process"/>
    <property type="evidence" value="ECO:0007669"/>
    <property type="project" value="TreeGrafter"/>
</dbReference>
<dbReference type="GO" id="GO:0009264">
    <property type="term" value="P:deoxyribonucleotide catabolic process"/>
    <property type="evidence" value="ECO:0007669"/>
    <property type="project" value="InterPro"/>
</dbReference>
<dbReference type="CDD" id="cd00959">
    <property type="entry name" value="DeoC"/>
    <property type="match status" value="1"/>
</dbReference>
<dbReference type="FunFam" id="3.20.20.70:FF:000044">
    <property type="entry name" value="Deoxyribose-phosphate aldolase"/>
    <property type="match status" value="1"/>
</dbReference>
<dbReference type="Gene3D" id="3.20.20.70">
    <property type="entry name" value="Aldolase class I"/>
    <property type="match status" value="1"/>
</dbReference>
<dbReference type="HAMAP" id="MF_00114">
    <property type="entry name" value="DeoC_type1"/>
    <property type="match status" value="1"/>
</dbReference>
<dbReference type="InterPro" id="IPR013785">
    <property type="entry name" value="Aldolase_TIM"/>
</dbReference>
<dbReference type="InterPro" id="IPR011343">
    <property type="entry name" value="DeoC"/>
</dbReference>
<dbReference type="InterPro" id="IPR002915">
    <property type="entry name" value="DeoC/FbaB/LacD_aldolase"/>
</dbReference>
<dbReference type="InterPro" id="IPR028581">
    <property type="entry name" value="DeoC_typeI"/>
</dbReference>
<dbReference type="NCBIfam" id="TIGR00126">
    <property type="entry name" value="deoC"/>
    <property type="match status" value="1"/>
</dbReference>
<dbReference type="PANTHER" id="PTHR10889">
    <property type="entry name" value="DEOXYRIBOSE-PHOSPHATE ALDOLASE"/>
    <property type="match status" value="1"/>
</dbReference>
<dbReference type="PANTHER" id="PTHR10889:SF1">
    <property type="entry name" value="DEOXYRIBOSE-PHOSPHATE ALDOLASE"/>
    <property type="match status" value="1"/>
</dbReference>
<dbReference type="Pfam" id="PF01791">
    <property type="entry name" value="DeoC"/>
    <property type="match status" value="1"/>
</dbReference>
<dbReference type="PIRSF" id="PIRSF001357">
    <property type="entry name" value="DeoC"/>
    <property type="match status" value="1"/>
</dbReference>
<dbReference type="SMART" id="SM01133">
    <property type="entry name" value="DeoC"/>
    <property type="match status" value="1"/>
</dbReference>
<dbReference type="SUPFAM" id="SSF51569">
    <property type="entry name" value="Aldolase"/>
    <property type="match status" value="1"/>
</dbReference>